<organism>
    <name type="scientific">Listeria monocytogenes serovar 1/2a (strain ATCC BAA-679 / EGD-e)</name>
    <dbReference type="NCBI Taxonomy" id="169963"/>
    <lineage>
        <taxon>Bacteria</taxon>
        <taxon>Bacillati</taxon>
        <taxon>Bacillota</taxon>
        <taxon>Bacilli</taxon>
        <taxon>Bacillales</taxon>
        <taxon>Listeriaceae</taxon>
        <taxon>Listeria</taxon>
    </lineage>
</organism>
<name>HDOX_LISMO</name>
<accession>Q92EH3</accession>
<sequence>MIIVTNTIKVEKGAAEHVIRQFTGANGDGHPTKDIAEVEGFLGFELWHSKPEDKDYEEVVVTSKWESEEAQRNWVKSDSFKKAHGRTKDTREQREDRKGIVGNAIARFEVVHVQNPVIVEK</sequence>
<proteinExistence type="inferred from homology"/>
<keyword id="KW-0963">Cytoplasm</keyword>
<keyword id="KW-0349">Heme</keyword>
<keyword id="KW-0408">Iron</keyword>
<keyword id="KW-0479">Metal-binding</keyword>
<keyword id="KW-0503">Monooxygenase</keyword>
<keyword id="KW-0560">Oxidoreductase</keyword>
<keyword id="KW-1185">Reference proteome</keyword>
<comment type="function">
    <text evidence="1">Allows bacterial pathogens to use the host heme as an iron source. Catalyzes the oxidative degradation of the heme macrocyclic porphyrin ring to the biliverdin in the presence of a suitable electron donor such as ascorbate or NADPH--cytochrome P450 reductase, with subsequent release of free iron.</text>
</comment>
<comment type="catalytic activity">
    <reaction evidence="1">
        <text>heme b + 3 reduced [NADPH--hemoprotein reductase] + 3 O2 = biliverdin IXalpha + CO + Fe(2+) + 3 oxidized [NADPH--hemoprotein reductase] + 3 H2O + H(+)</text>
        <dbReference type="Rhea" id="RHEA:21764"/>
        <dbReference type="Rhea" id="RHEA-COMP:11964"/>
        <dbReference type="Rhea" id="RHEA-COMP:11965"/>
        <dbReference type="ChEBI" id="CHEBI:15377"/>
        <dbReference type="ChEBI" id="CHEBI:15378"/>
        <dbReference type="ChEBI" id="CHEBI:15379"/>
        <dbReference type="ChEBI" id="CHEBI:17245"/>
        <dbReference type="ChEBI" id="CHEBI:29033"/>
        <dbReference type="ChEBI" id="CHEBI:57618"/>
        <dbReference type="ChEBI" id="CHEBI:57991"/>
        <dbReference type="ChEBI" id="CHEBI:58210"/>
        <dbReference type="ChEBI" id="CHEBI:60344"/>
        <dbReference type="EC" id="1.14.14.18"/>
    </reaction>
</comment>
<comment type="subunit">
    <text evidence="1">Homodimer.</text>
</comment>
<comment type="subcellular location">
    <subcellularLocation>
        <location evidence="1">Cytoplasm</location>
    </subcellularLocation>
</comment>
<comment type="similarity">
    <text evidence="1">Belongs to the antibiotic biosynthesis monooxygenase family. Heme-degrading monooxygenase IsdG subfamily.</text>
</comment>
<dbReference type="EC" id="1.14.14.18" evidence="1"/>
<dbReference type="EMBL" id="AL591975">
    <property type="protein sequence ID" value="CAC98563.1"/>
    <property type="molecule type" value="Genomic_DNA"/>
</dbReference>
<dbReference type="PIR" id="AE1135">
    <property type="entry name" value="AE1135"/>
</dbReference>
<dbReference type="PIR" id="AG1493">
    <property type="entry name" value="AG1493"/>
</dbReference>
<dbReference type="RefSeq" id="NP_464012.1">
    <property type="nucleotide sequence ID" value="NC_003210.1"/>
</dbReference>
<dbReference type="RefSeq" id="WP_003721271.1">
    <property type="nucleotide sequence ID" value="NZ_CP149495.1"/>
</dbReference>
<dbReference type="SMR" id="Q92EH3"/>
<dbReference type="STRING" id="169963.gene:17593135"/>
<dbReference type="PaxDb" id="169963-lmo0484"/>
<dbReference type="EnsemblBacteria" id="CAC98563">
    <property type="protein sequence ID" value="CAC98563"/>
    <property type="gene ID" value="CAC98563"/>
</dbReference>
<dbReference type="GeneID" id="93233935"/>
<dbReference type="GeneID" id="985220"/>
<dbReference type="KEGG" id="lmo:lmo0484"/>
<dbReference type="PATRIC" id="fig|169963.11.peg.503"/>
<dbReference type="eggNOG" id="COG2329">
    <property type="taxonomic scope" value="Bacteria"/>
</dbReference>
<dbReference type="HOGENOM" id="CLU_141544_2_0_9"/>
<dbReference type="OrthoDB" id="384737at2"/>
<dbReference type="PhylomeDB" id="Q92EH3"/>
<dbReference type="BioCyc" id="LMON169963:LMO0484-MONOMER"/>
<dbReference type="Proteomes" id="UP000000817">
    <property type="component" value="Chromosome"/>
</dbReference>
<dbReference type="GO" id="GO:0005737">
    <property type="term" value="C:cytoplasm"/>
    <property type="evidence" value="ECO:0007669"/>
    <property type="project" value="UniProtKB-SubCell"/>
</dbReference>
<dbReference type="GO" id="GO:0020037">
    <property type="term" value="F:heme binding"/>
    <property type="evidence" value="ECO:0007669"/>
    <property type="project" value="UniProtKB-UniRule"/>
</dbReference>
<dbReference type="GO" id="GO:0004392">
    <property type="term" value="F:heme oxygenase (decyclizing) activity"/>
    <property type="evidence" value="ECO:0000318"/>
    <property type="project" value="GO_Central"/>
</dbReference>
<dbReference type="GO" id="GO:0005506">
    <property type="term" value="F:iron ion binding"/>
    <property type="evidence" value="ECO:0007669"/>
    <property type="project" value="UniProtKB-UniRule"/>
</dbReference>
<dbReference type="GO" id="GO:0042167">
    <property type="term" value="P:heme catabolic process"/>
    <property type="evidence" value="ECO:0000318"/>
    <property type="project" value="GO_Central"/>
</dbReference>
<dbReference type="GO" id="GO:0033212">
    <property type="term" value="P:iron import into cell"/>
    <property type="evidence" value="ECO:0007669"/>
    <property type="project" value="InterPro"/>
</dbReference>
<dbReference type="Gene3D" id="3.30.70.100">
    <property type="match status" value="1"/>
</dbReference>
<dbReference type="HAMAP" id="MF_01272">
    <property type="entry name" value="Heme_degrading_monooxygenase"/>
    <property type="match status" value="1"/>
</dbReference>
<dbReference type="InterPro" id="IPR007138">
    <property type="entry name" value="ABM_dom"/>
</dbReference>
<dbReference type="InterPro" id="IPR011008">
    <property type="entry name" value="Dimeric_a/b-barrel"/>
</dbReference>
<dbReference type="InterPro" id="IPR050404">
    <property type="entry name" value="Heme-degrading_MO"/>
</dbReference>
<dbReference type="InterPro" id="IPR023953">
    <property type="entry name" value="IsdG"/>
</dbReference>
<dbReference type="NCBIfam" id="NF009841">
    <property type="entry name" value="PRK13316.1"/>
    <property type="match status" value="1"/>
</dbReference>
<dbReference type="PANTHER" id="PTHR34474:SF4">
    <property type="entry name" value="HEME OXYGENASE (STAPHYLOBILIN-PRODUCING) 1"/>
    <property type="match status" value="1"/>
</dbReference>
<dbReference type="PANTHER" id="PTHR34474">
    <property type="entry name" value="SIGNAL TRANSDUCTION PROTEIN TRAP"/>
    <property type="match status" value="1"/>
</dbReference>
<dbReference type="Pfam" id="PF03992">
    <property type="entry name" value="ABM"/>
    <property type="match status" value="1"/>
</dbReference>
<dbReference type="SUPFAM" id="SSF54909">
    <property type="entry name" value="Dimeric alpha+beta barrel"/>
    <property type="match status" value="1"/>
</dbReference>
<dbReference type="PROSITE" id="PS51725">
    <property type="entry name" value="ABM"/>
    <property type="match status" value="1"/>
</dbReference>
<evidence type="ECO:0000255" key="1">
    <source>
        <dbReference type="HAMAP-Rule" id="MF_01272"/>
    </source>
</evidence>
<evidence type="ECO:0000256" key="2">
    <source>
        <dbReference type="SAM" id="MobiDB-lite"/>
    </source>
</evidence>
<reference key="1">
    <citation type="journal article" date="2001" name="Science">
        <title>Comparative genomics of Listeria species.</title>
        <authorList>
            <person name="Glaser P."/>
            <person name="Frangeul L."/>
            <person name="Buchrieser C."/>
            <person name="Rusniok C."/>
            <person name="Amend A."/>
            <person name="Baquero F."/>
            <person name="Berche P."/>
            <person name="Bloecker H."/>
            <person name="Brandt P."/>
            <person name="Chakraborty T."/>
            <person name="Charbit A."/>
            <person name="Chetouani F."/>
            <person name="Couve E."/>
            <person name="de Daruvar A."/>
            <person name="Dehoux P."/>
            <person name="Domann E."/>
            <person name="Dominguez-Bernal G."/>
            <person name="Duchaud E."/>
            <person name="Durant L."/>
            <person name="Dussurget O."/>
            <person name="Entian K.-D."/>
            <person name="Fsihi H."/>
            <person name="Garcia-del Portillo F."/>
            <person name="Garrido P."/>
            <person name="Gautier L."/>
            <person name="Goebel W."/>
            <person name="Gomez-Lopez N."/>
            <person name="Hain T."/>
            <person name="Hauf J."/>
            <person name="Jackson D."/>
            <person name="Jones L.-M."/>
            <person name="Kaerst U."/>
            <person name="Kreft J."/>
            <person name="Kuhn M."/>
            <person name="Kunst F."/>
            <person name="Kurapkat G."/>
            <person name="Madueno E."/>
            <person name="Maitournam A."/>
            <person name="Mata Vicente J."/>
            <person name="Ng E."/>
            <person name="Nedjari H."/>
            <person name="Nordsiek G."/>
            <person name="Novella S."/>
            <person name="de Pablos B."/>
            <person name="Perez-Diaz J.-C."/>
            <person name="Purcell R."/>
            <person name="Remmel B."/>
            <person name="Rose M."/>
            <person name="Schlueter T."/>
            <person name="Simoes N."/>
            <person name="Tierrez A."/>
            <person name="Vazquez-Boland J.-A."/>
            <person name="Voss H."/>
            <person name="Wehland J."/>
            <person name="Cossart P."/>
        </authorList>
    </citation>
    <scope>NUCLEOTIDE SEQUENCE [LARGE SCALE GENOMIC DNA]</scope>
    <source>
        <strain>ATCC BAA-679 / EGD-e</strain>
    </source>
</reference>
<gene>
    <name evidence="1" type="primary">isdG</name>
    <name type="ordered locus">lmo0484</name>
</gene>
<protein>
    <recommendedName>
        <fullName evidence="1">Heme-degrading monooxygenase</fullName>
        <ecNumber evidence="1">1.14.14.18</ecNumber>
    </recommendedName>
    <alternativeName>
        <fullName evidence="1">Heme oxygenase</fullName>
    </alternativeName>
    <alternativeName>
        <fullName evidence="1">Iron-regulated surface determinant</fullName>
    </alternativeName>
    <alternativeName>
        <fullName evidence="1">Iron-responsive surface determinant</fullName>
    </alternativeName>
</protein>
<feature type="chain" id="PRO_0000270078" description="Heme-degrading monooxygenase">
    <location>
        <begin position="1"/>
        <end position="121"/>
    </location>
</feature>
<feature type="domain" description="ABM" evidence="1">
    <location>
        <begin position="2"/>
        <end position="101"/>
    </location>
</feature>
<feature type="region of interest" description="Disordered" evidence="2">
    <location>
        <begin position="76"/>
        <end position="98"/>
    </location>
</feature>
<feature type="compositionally biased region" description="Basic and acidic residues" evidence="2">
    <location>
        <begin position="78"/>
        <end position="98"/>
    </location>
</feature>
<feature type="binding site" evidence="1">
    <location>
        <position position="6"/>
    </location>
    <ligand>
        <name>Fe cation</name>
        <dbReference type="ChEBI" id="CHEBI:24875"/>
    </ligand>
</feature>
<feature type="binding site" description="axial binding residue" evidence="1">
    <location>
        <position position="84"/>
    </location>
    <ligand>
        <name>heme</name>
        <dbReference type="ChEBI" id="CHEBI:30413"/>
    </ligand>
    <ligandPart>
        <name>Fe</name>
        <dbReference type="ChEBI" id="CHEBI:18248"/>
    </ligandPart>
</feature>
<feature type="site" description="Transition state stabilizer" evidence="1">
    <location>
        <position position="74"/>
    </location>
</feature>